<comment type="function">
    <text evidence="1 3">Plays several crucial roles in viral infection. Participates in the opening of the viral DNA origin to initiate replication by interacting with the origin-binding protein (PubMed:8230421). May disrupt loops, hairpins and other secondary structures present on ssDNA to reduce and eliminate pausing of viral DNA polymerase at specific sites during elongation. Promotes viral DNA recombination by performing strand-transfer, characterized by the ability to transfer a DNA strand from a linear duplex to a complementary single-stranded DNA circle. Can also catalyze the renaturation of complementary single strands. Additionally, reorganizes the host cell nucleus, leading to the formation of prereplicative sites and replication compartments. This process is driven by the protein which can form double-helical filaments in the absence of DNA.</text>
</comment>
<comment type="subunit">
    <text evidence="1">Homooligomers. Forms double-helical filaments necessary for the formation of replication compartments within the host nucleus. Interacts with the origin-binding protein. Interacts with the helicase primase complex; this interaction stimulates primer synthesis activity of the helicase-primase complex. Interacts with the DNA polymerase. Interacts with the alkaline exonuclease; this interaction increases its nuclease processivity.</text>
</comment>
<comment type="subcellular location">
    <subcellularLocation>
        <location evidence="1">Host nucleus</location>
    </subcellularLocation>
    <text evidence="1">In the absence of DNA replication, found in the nuclear framework-associated structures (prereplicative sites). As viral DNA replication proceeds, it migrates to globular intranuclear structures (replication compartments).</text>
</comment>
<comment type="similarity">
    <text evidence="1">Belongs to the herpesviridae major DNA-binding protein family.</text>
</comment>
<dbReference type="EMBL" id="X17403">
    <property type="protein sequence ID" value="CAA35372.1"/>
    <property type="molecule type" value="Genomic_DNA"/>
</dbReference>
<dbReference type="EMBL" id="BK000394">
    <property type="protein sequence ID" value="DAA00162.1"/>
    <property type="molecule type" value="Genomic_DNA"/>
</dbReference>
<dbReference type="PIR" id="S09820">
    <property type="entry name" value="QQBEW4"/>
</dbReference>
<dbReference type="SMR" id="P17147"/>
<dbReference type="Proteomes" id="UP000008991">
    <property type="component" value="Segment"/>
</dbReference>
<dbReference type="Proteomes" id="UP000008992">
    <property type="component" value="Segment"/>
</dbReference>
<dbReference type="GO" id="GO:0042025">
    <property type="term" value="C:host cell nucleus"/>
    <property type="evidence" value="ECO:0007669"/>
    <property type="project" value="UniProtKB-SubCell"/>
</dbReference>
<dbReference type="GO" id="GO:0003697">
    <property type="term" value="F:single-stranded DNA binding"/>
    <property type="evidence" value="ECO:0007669"/>
    <property type="project" value="InterPro"/>
</dbReference>
<dbReference type="GO" id="GO:0039686">
    <property type="term" value="P:bidirectional double-stranded viral DNA replication"/>
    <property type="evidence" value="ECO:0000314"/>
    <property type="project" value="UniProtKB"/>
</dbReference>
<dbReference type="GO" id="GO:0006260">
    <property type="term" value="P:DNA replication"/>
    <property type="evidence" value="ECO:0007669"/>
    <property type="project" value="UniProtKB-KW"/>
</dbReference>
<dbReference type="Gene3D" id="1.20.190.40">
    <property type="entry name" value="Viral ssDNA binding protein, head domain"/>
    <property type="match status" value="1"/>
</dbReference>
<dbReference type="HAMAP" id="MF_04007">
    <property type="entry name" value="HSV_DNBI"/>
    <property type="match status" value="1"/>
</dbReference>
<dbReference type="InterPro" id="IPR035989">
    <property type="entry name" value="DBP_sf"/>
</dbReference>
<dbReference type="InterPro" id="IPR043031">
    <property type="entry name" value="Viral_ssDBP_head"/>
</dbReference>
<dbReference type="InterPro" id="IPR000635">
    <property type="entry name" value="Viral_ssDNA-bd"/>
</dbReference>
<dbReference type="Pfam" id="PF00747">
    <property type="entry name" value="Viral_DNA_bp"/>
    <property type="match status" value="1"/>
</dbReference>
<dbReference type="SUPFAM" id="SSF118208">
    <property type="entry name" value="Viral ssDNA binding protein"/>
    <property type="match status" value="1"/>
</dbReference>
<protein>
    <recommendedName>
        <fullName evidence="1">Major DNA-binding protein</fullName>
    </recommendedName>
</protein>
<organismHost>
    <name type="scientific">Homo sapiens</name>
    <name type="common">Human</name>
    <dbReference type="NCBI Taxonomy" id="9606"/>
</organismHost>
<evidence type="ECO:0000255" key="1">
    <source>
        <dbReference type="HAMAP-Rule" id="MF_04007"/>
    </source>
</evidence>
<evidence type="ECO:0000256" key="2">
    <source>
        <dbReference type="SAM" id="MobiDB-lite"/>
    </source>
</evidence>
<evidence type="ECO:0000269" key="3">
    <source>
    </source>
</evidence>
<organism>
    <name type="scientific">Human cytomegalovirus (strain AD169)</name>
    <name type="common">HHV-5</name>
    <name type="synonym">Human herpesvirus 5</name>
    <dbReference type="NCBI Taxonomy" id="10360"/>
    <lineage>
        <taxon>Viruses</taxon>
        <taxon>Duplodnaviria</taxon>
        <taxon>Heunggongvirae</taxon>
        <taxon>Peploviricota</taxon>
        <taxon>Herviviricetes</taxon>
        <taxon>Herpesvirales</taxon>
        <taxon>Orthoherpesviridae</taxon>
        <taxon>Betaherpesvirinae</taxon>
        <taxon>Cytomegalovirus</taxon>
        <taxon>Cytomegalovirus humanbeta5</taxon>
        <taxon>Human cytomegalovirus</taxon>
    </lineage>
</organism>
<accession>P17147</accession>
<accession>Q7M6M6</accession>
<sequence>MSHEELTALAPVGPAAFLYFSRLNAETQEILATLSLCDRSSSVVIAPLLAGLTVEADFGVSVRTPVLCYDGGVLTKVTSFCPFALYFHHTQGIVAFTEDHGDVHRLCEDARQKYALEAYMPEADRVPTDLAALCAAVGCQASETTVHVVVGNGLKEFLFAGQLIPCVEEATTVRLHGGEAVRVPLYPPTLFNSLQLDAEADEVSLDARSAFVEARGLYVPAVSETLFYYVYTSWCQSLRFSEPRVLIEAALRQFVHDSQQSVKLAPHKRYLGYMSQRLSSLEKDHLMLSDAVVCELAFSFASVFFDSAYQPAESMLFSEWPLVTNATDHRDLIRALTELKLHLSTHVAALVFSANSVLYQHRLVYLQSSARHPSAGGTASQETLLKAIQFTNGLSAACEDVYNDARKVLKFQGAPLKDERYGPQHLALVCGTCPQLVSGFVWYLNRVSVYNTGLSGSSTLTNHLVGCAAGLCEACGGTCCHTCYQTAFVRVRTRLPVVPKQPKKEPCVITVQSRFLNDVDILGSFGRRYNVDAKDGGLDGKGDDGVPGGGAGGGGGRDVSGGPSDGLGGGRGGGGGGDSGGMMGRGGRMLGASVDRTYRLNRILDYCRKMRLIDPVTGEDTFSAHGKSDFVAVFSALNKFVDDEALGFVSEVRLKSSRDEVAGATQAFNLDLNPYAVAFQPLLAYAYFRSVFYVIQNVALITATSYIVDNPLTTNLVSKWMTQHFQSIHGAFSTTSSRKGFLFTKQIKSSKNSDHDRLLDFRLYAQGTYAVVPMEIKLSRLSVPTLIMVRVKNRPIYRAGKGNAGSVFFRRDHVPRRNPAKGCLGFLLYRHHERLFPECGLPCLQFWQKVCSNALPKNVPIGDMGEFNAFVKFLVAVTADYQEHDLLDVAPDCVLSYVESRFHNKFLCYYGFKDYIGSLHGLTTRLTTQNHAQFPHVLGASPRFSSPAEFALHVKGLKTAGVPAPMAATVARESLVRSVFEHRSLVTVPVSVEKYAGINNSKEIYQFGQIGYFSGNGVERSLNVSSMSGQDYRFMRQRYLLATRLADVLIKRSRRENVLFDADLIKNRVMLALDAENLDCDPEVMAVYEILSVREEIPASDDVLFFVDGCEALAASLMDKFAALQEQGVEDFSLENLRRVLDADAQRLTDAAGGEVHDLSALFAPSGVGAASGVGGGGLLLGESVAGNSICFGVPGETGGGCFLVNAGEDEAGGVGGSSGGGGGSGLLPAKRSRL</sequence>
<name>DNBI_HCMVA</name>
<feature type="chain" id="PRO_0000115759" description="Major DNA-binding protein">
    <location>
        <begin position="1"/>
        <end position="1235"/>
    </location>
</feature>
<feature type="region of interest" description="Disordered" evidence="2">
    <location>
        <begin position="536"/>
        <end position="584"/>
    </location>
</feature>
<feature type="region of interest" description="Disordered" evidence="2">
    <location>
        <begin position="1214"/>
        <end position="1235"/>
    </location>
</feature>
<feature type="region of interest" description="Required for nuclear localization" evidence="1">
    <location>
        <begin position="1232"/>
        <end position="1235"/>
    </location>
</feature>
<feature type="short sequence motif" description="Required for filament formation" evidence="1">
    <location>
        <begin position="846"/>
        <end position="847"/>
    </location>
</feature>
<feature type="compositionally biased region" description="Gly residues" evidence="2">
    <location>
        <begin position="545"/>
        <end position="584"/>
    </location>
</feature>
<feature type="compositionally biased region" description="Gly residues" evidence="2">
    <location>
        <begin position="1214"/>
        <end position="1226"/>
    </location>
</feature>
<reference key="1">
    <citation type="journal article" date="1990" name="Curr. Top. Microbiol. Immunol.">
        <title>Analysis of the protein-coding content of the sequence of human cytomegalovirus strain AD169.</title>
        <authorList>
            <person name="Chee M.S."/>
            <person name="Bankier A.T."/>
            <person name="Beck S."/>
            <person name="Bohni R."/>
            <person name="Brown C.M."/>
            <person name="Cerny R."/>
            <person name="Horsnell T."/>
            <person name="Hutchison C.A. III"/>
            <person name="Kouzarides T."/>
            <person name="Martignetti J.A."/>
            <person name="Preddie E."/>
            <person name="Satchwell S.C."/>
            <person name="Tomlinson P."/>
            <person name="Weston K.M."/>
            <person name="Barrell B.G."/>
        </authorList>
    </citation>
    <scope>NUCLEOTIDE SEQUENCE [LARGE SCALE GENOMIC DNA]</scope>
</reference>
<reference key="2">
    <citation type="journal article" date="2003" name="J. Gen. Virol.">
        <title>The human cytomegalovirus genome revisited: comparison with the chimpanzee cytomegalovirus genome.</title>
        <authorList>
            <person name="Davison A.J."/>
            <person name="Dolan A."/>
            <person name="Akter P."/>
            <person name="Addison C."/>
            <person name="Dargan D.J."/>
            <person name="Alcendor D.J."/>
            <person name="McGeoch D.J."/>
            <person name="Hayward G.S."/>
        </authorList>
    </citation>
    <scope>GENOME REANNOTATION</scope>
</reference>
<reference key="3">
    <citation type="journal article" date="2003" name="J. Gen. Virol.">
        <authorList>
            <person name="Davison A.J."/>
            <person name="Dolan A."/>
            <person name="Akter P."/>
            <person name="Addison C."/>
            <person name="Dargan D.J."/>
            <person name="Alcendor D.J."/>
            <person name="McGeoch D.J."/>
            <person name="Hayward G.S."/>
        </authorList>
    </citation>
    <scope>ERRATUM OF PUBMED:12533697</scope>
</reference>
<reference key="4">
    <citation type="journal article" date="1993" name="J. Virol.">
        <title>Eleven loci encoding trans-acting factors are required for transient complementation of human cytomegalovirus oriLyt-dependent DNA replication.</title>
        <authorList>
            <person name="Pari G.S."/>
            <person name="Anders D.G."/>
        </authorList>
    </citation>
    <scope>FUNCTION IN DNA REPLICATION</scope>
</reference>
<reference key="5">
    <citation type="journal article" date="2004" name="J. Virol.">
        <title>Identification of proteins in human cytomegalovirus (HCMV) particles: the HCMV proteome.</title>
        <authorList>
            <person name="Varnum S.M."/>
            <person name="Streblow D.N."/>
            <person name="Monroe M.E."/>
            <person name="Smith P."/>
            <person name="Auberry K.J."/>
            <person name="Pasa-Tolic L."/>
            <person name="Wang D."/>
            <person name="Camp D.G. II"/>
            <person name="Rodland K."/>
            <person name="Wiley S."/>
            <person name="Britt W."/>
            <person name="Shenk T."/>
            <person name="Smith R.D."/>
            <person name="Nelson J.A."/>
        </authorList>
    </citation>
    <scope>IDENTIFICATION</scope>
</reference>
<reference key="6">
    <citation type="journal article" date="2004" name="J. Virol.">
        <authorList>
            <person name="Varnum S.M."/>
            <person name="Streblow D.N."/>
            <person name="Monroe M.E."/>
            <person name="Smith P."/>
            <person name="Auberry K.J."/>
            <person name="Pasa-Tolic L."/>
            <person name="Wang D."/>
            <person name="Camp D.G. II"/>
            <person name="Rodland K."/>
            <person name="Wiley S."/>
            <person name="Britt W."/>
            <person name="Shenk T."/>
            <person name="Smith R.D."/>
            <person name="Nelson J.A."/>
        </authorList>
    </citation>
    <scope>ERRATUM OF PUBMED:15452216</scope>
</reference>
<gene>
    <name evidence="1" type="primary">DBP</name>
    <name type="synonym">UL57</name>
</gene>
<proteinExistence type="evidence at protein level"/>
<keyword id="KW-0235">DNA replication</keyword>
<keyword id="KW-0238">DNA-binding</keyword>
<keyword id="KW-1048">Host nucleus</keyword>
<keyword id="KW-1185">Reference proteome</keyword>